<feature type="chain" id="PRO_1000127010" description="Peptidase B">
    <location>
        <begin position="1"/>
        <end position="427"/>
    </location>
</feature>
<feature type="active site" evidence="1">
    <location>
        <position position="207"/>
    </location>
</feature>
<feature type="active site" evidence="1">
    <location>
        <position position="281"/>
    </location>
</feature>
<feature type="binding site" evidence="1">
    <location>
        <position position="195"/>
    </location>
    <ligand>
        <name>Mn(2+)</name>
        <dbReference type="ChEBI" id="CHEBI:29035"/>
        <label>2</label>
    </ligand>
</feature>
<feature type="binding site" evidence="1">
    <location>
        <position position="200"/>
    </location>
    <ligand>
        <name>Mn(2+)</name>
        <dbReference type="ChEBI" id="CHEBI:29035"/>
        <label>1</label>
    </ligand>
</feature>
<feature type="binding site" evidence="1">
    <location>
        <position position="200"/>
    </location>
    <ligand>
        <name>Mn(2+)</name>
        <dbReference type="ChEBI" id="CHEBI:29035"/>
        <label>2</label>
    </ligand>
</feature>
<feature type="binding site" evidence="1">
    <location>
        <position position="218"/>
    </location>
    <ligand>
        <name>Mn(2+)</name>
        <dbReference type="ChEBI" id="CHEBI:29035"/>
        <label>2</label>
    </ligand>
</feature>
<feature type="binding site" evidence="1">
    <location>
        <position position="277"/>
    </location>
    <ligand>
        <name>Mn(2+)</name>
        <dbReference type="ChEBI" id="CHEBI:29035"/>
        <label>1</label>
    </ligand>
</feature>
<feature type="binding site" evidence="1">
    <location>
        <position position="279"/>
    </location>
    <ligand>
        <name>Mn(2+)</name>
        <dbReference type="ChEBI" id="CHEBI:29035"/>
        <label>1</label>
    </ligand>
</feature>
<feature type="binding site" evidence="1">
    <location>
        <position position="279"/>
    </location>
    <ligand>
        <name>Mn(2+)</name>
        <dbReference type="ChEBI" id="CHEBI:29035"/>
        <label>2</label>
    </ligand>
</feature>
<gene>
    <name evidence="1" type="primary">pepB</name>
    <name type="ordered locus">EFER_0649</name>
</gene>
<accession>B7LKB6</accession>
<organism>
    <name type="scientific">Escherichia fergusonii (strain ATCC 35469 / DSM 13698 / CCUG 18766 / IAM 14443 / JCM 21226 / LMG 7866 / NBRC 102419 / NCTC 12128 / CDC 0568-73)</name>
    <dbReference type="NCBI Taxonomy" id="585054"/>
    <lineage>
        <taxon>Bacteria</taxon>
        <taxon>Pseudomonadati</taxon>
        <taxon>Pseudomonadota</taxon>
        <taxon>Gammaproteobacteria</taxon>
        <taxon>Enterobacterales</taxon>
        <taxon>Enterobacteriaceae</taxon>
        <taxon>Escherichia</taxon>
    </lineage>
</organism>
<name>PEPB_ESCF3</name>
<keyword id="KW-0031">Aminopeptidase</keyword>
<keyword id="KW-0963">Cytoplasm</keyword>
<keyword id="KW-0378">Hydrolase</keyword>
<keyword id="KW-0464">Manganese</keyword>
<keyword id="KW-0479">Metal-binding</keyword>
<keyword id="KW-0645">Protease</keyword>
<reference key="1">
    <citation type="journal article" date="2009" name="PLoS Genet.">
        <title>Organised genome dynamics in the Escherichia coli species results in highly diverse adaptive paths.</title>
        <authorList>
            <person name="Touchon M."/>
            <person name="Hoede C."/>
            <person name="Tenaillon O."/>
            <person name="Barbe V."/>
            <person name="Baeriswyl S."/>
            <person name="Bidet P."/>
            <person name="Bingen E."/>
            <person name="Bonacorsi S."/>
            <person name="Bouchier C."/>
            <person name="Bouvet O."/>
            <person name="Calteau A."/>
            <person name="Chiapello H."/>
            <person name="Clermont O."/>
            <person name="Cruveiller S."/>
            <person name="Danchin A."/>
            <person name="Diard M."/>
            <person name="Dossat C."/>
            <person name="Karoui M.E."/>
            <person name="Frapy E."/>
            <person name="Garry L."/>
            <person name="Ghigo J.M."/>
            <person name="Gilles A.M."/>
            <person name="Johnson J."/>
            <person name="Le Bouguenec C."/>
            <person name="Lescat M."/>
            <person name="Mangenot S."/>
            <person name="Martinez-Jehanne V."/>
            <person name="Matic I."/>
            <person name="Nassif X."/>
            <person name="Oztas S."/>
            <person name="Petit M.A."/>
            <person name="Pichon C."/>
            <person name="Rouy Z."/>
            <person name="Ruf C.S."/>
            <person name="Schneider D."/>
            <person name="Tourret J."/>
            <person name="Vacherie B."/>
            <person name="Vallenet D."/>
            <person name="Medigue C."/>
            <person name="Rocha E.P.C."/>
            <person name="Denamur E."/>
        </authorList>
    </citation>
    <scope>NUCLEOTIDE SEQUENCE [LARGE SCALE GENOMIC DNA]</scope>
    <source>
        <strain>ATCC 35469 / DSM 13698 / BCRC 15582 / CCUG 18766 / IAM 14443 / JCM 21226 / LMG 7866 / NBRC 102419 / NCTC 12128 / CDC 0568-73</strain>
    </source>
</reference>
<protein>
    <recommendedName>
        <fullName evidence="1">Peptidase B</fullName>
        <ecNumber evidence="1">3.4.11.23</ecNumber>
    </recommendedName>
    <alternativeName>
        <fullName evidence="1">Aminopeptidase B</fullName>
    </alternativeName>
</protein>
<proteinExistence type="inferred from homology"/>
<comment type="function">
    <text evidence="1">Probably plays an important role in intracellular peptide degradation.</text>
</comment>
<comment type="catalytic activity">
    <reaction evidence="1">
        <text>Release of an N-terminal amino acid, Xaa, from a peptide or arylamide. Xaa is preferably Glu or Asp but may be other amino acids, including Leu, Met, His, Cys and Gln.</text>
        <dbReference type="EC" id="3.4.11.23"/>
    </reaction>
</comment>
<comment type="cofactor">
    <cofactor evidence="1">
        <name>Mn(2+)</name>
        <dbReference type="ChEBI" id="CHEBI:29035"/>
    </cofactor>
    <text evidence="1">Binds 2 manganese ions per subunit.</text>
</comment>
<comment type="subunit">
    <text evidence="1">Homohexamer.</text>
</comment>
<comment type="subcellular location">
    <subcellularLocation>
        <location evidence="1">Cytoplasm</location>
    </subcellularLocation>
</comment>
<comment type="similarity">
    <text evidence="1">Belongs to the peptidase M17 family.</text>
</comment>
<dbReference type="EC" id="3.4.11.23" evidence="1"/>
<dbReference type="EMBL" id="CU928158">
    <property type="protein sequence ID" value="CAQ88193.1"/>
    <property type="molecule type" value="Genomic_DNA"/>
</dbReference>
<dbReference type="RefSeq" id="WP_000133572.1">
    <property type="nucleotide sequence ID" value="NC_011740.1"/>
</dbReference>
<dbReference type="SMR" id="B7LKB6"/>
<dbReference type="MEROPS" id="M17.004"/>
<dbReference type="GeneID" id="75058291"/>
<dbReference type="KEGG" id="efe:EFER_0649"/>
<dbReference type="HOGENOM" id="CLU_013734_7_1_6"/>
<dbReference type="OrthoDB" id="9809354at2"/>
<dbReference type="Proteomes" id="UP000000745">
    <property type="component" value="Chromosome"/>
</dbReference>
<dbReference type="GO" id="GO:0005737">
    <property type="term" value="C:cytoplasm"/>
    <property type="evidence" value="ECO:0007669"/>
    <property type="project" value="UniProtKB-SubCell"/>
</dbReference>
<dbReference type="GO" id="GO:0030145">
    <property type="term" value="F:manganese ion binding"/>
    <property type="evidence" value="ECO:0007669"/>
    <property type="project" value="UniProtKB-UniRule"/>
</dbReference>
<dbReference type="GO" id="GO:0070006">
    <property type="term" value="F:metalloaminopeptidase activity"/>
    <property type="evidence" value="ECO:0007669"/>
    <property type="project" value="InterPro"/>
</dbReference>
<dbReference type="GO" id="GO:0006508">
    <property type="term" value="P:proteolysis"/>
    <property type="evidence" value="ECO:0007669"/>
    <property type="project" value="UniProtKB-UniRule"/>
</dbReference>
<dbReference type="CDD" id="cd00433">
    <property type="entry name" value="Peptidase_M17"/>
    <property type="match status" value="1"/>
</dbReference>
<dbReference type="FunFam" id="3.40.630.10:FF:000037">
    <property type="entry name" value="Peptidase B"/>
    <property type="match status" value="1"/>
</dbReference>
<dbReference type="Gene3D" id="3.40.630.10">
    <property type="entry name" value="Zn peptidases"/>
    <property type="match status" value="1"/>
</dbReference>
<dbReference type="HAMAP" id="MF_00504">
    <property type="entry name" value="Aminopeptidase_M17"/>
    <property type="match status" value="1"/>
</dbReference>
<dbReference type="InterPro" id="IPR011356">
    <property type="entry name" value="Leucine_aapep/pepB"/>
</dbReference>
<dbReference type="InterPro" id="IPR047620">
    <property type="entry name" value="M17_PepB-like_N"/>
</dbReference>
<dbReference type="InterPro" id="IPR008330">
    <property type="entry name" value="Pept_M17_PepB"/>
</dbReference>
<dbReference type="InterPro" id="IPR000819">
    <property type="entry name" value="Peptidase_M17_C"/>
</dbReference>
<dbReference type="NCBIfam" id="NF003450">
    <property type="entry name" value="PRK05015.1"/>
    <property type="match status" value="1"/>
</dbReference>
<dbReference type="PANTHER" id="PTHR11963">
    <property type="entry name" value="LEUCINE AMINOPEPTIDASE-RELATED"/>
    <property type="match status" value="1"/>
</dbReference>
<dbReference type="PANTHER" id="PTHR11963:SF20">
    <property type="entry name" value="PEPTIDASE B"/>
    <property type="match status" value="1"/>
</dbReference>
<dbReference type="Pfam" id="PF12404">
    <property type="entry name" value="DUF3663"/>
    <property type="match status" value="1"/>
</dbReference>
<dbReference type="Pfam" id="PF00883">
    <property type="entry name" value="Peptidase_M17"/>
    <property type="match status" value="1"/>
</dbReference>
<dbReference type="PIRSF" id="PIRSF036388">
    <property type="entry name" value="Ctsl_amnpptdse_B"/>
    <property type="match status" value="1"/>
</dbReference>
<dbReference type="PRINTS" id="PR00481">
    <property type="entry name" value="LAMNOPPTDASE"/>
</dbReference>
<dbReference type="SUPFAM" id="SSF53187">
    <property type="entry name" value="Zn-dependent exopeptidases"/>
    <property type="match status" value="1"/>
</dbReference>
<dbReference type="PROSITE" id="PS00631">
    <property type="entry name" value="CYTOSOL_AP"/>
    <property type="match status" value="1"/>
</dbReference>
<evidence type="ECO:0000255" key="1">
    <source>
        <dbReference type="HAMAP-Rule" id="MF_00504"/>
    </source>
</evidence>
<sequence length="427" mass="46236">MTEAMKITLSTQPADARWGEKATYSINNDGITLHLNGADDLGLIQRAARKIDGLGIKHVQLSGEGWDADRCWAFWQGYKAPKGTRKVEWPDLDDAQRQELDNRLMIIDWVRDTINAPAEELGPSQLAQRAVDLISNVAGDRVTYRITKGEDLRDQGYMGLHTVGRGSERSPVLLALDYNPTGDKEAPVYACLVGKGITFDSGGYSIKQTAFMDSMKSDMGGAATVTGALAFAITRGLNKRVKLFLCCADNLISGNAFKLGDIITYRNGKKVEVMNTDAEGRLVLADGLIDASAQKPELIIDAATLTGAAKTALGNDYHALFSFDDALAGRLLESAAQENEPFWRLPLAEFHRSQLPSNFAELNNTGSAAYPAGASTAAGFLSHFVENYKQGWLHIDCSATYRKAPVEQWSAGATGLGVRTIANLLTA</sequence>